<keyword id="KW-0030">Aminoacyl-tRNA synthetase</keyword>
<keyword id="KW-0067">ATP-binding</keyword>
<keyword id="KW-0963">Cytoplasm</keyword>
<keyword id="KW-0436">Ligase</keyword>
<keyword id="KW-0479">Metal-binding</keyword>
<keyword id="KW-0547">Nucleotide-binding</keyword>
<keyword id="KW-0648">Protein biosynthesis</keyword>
<keyword id="KW-0694">RNA-binding</keyword>
<keyword id="KW-0820">tRNA-binding</keyword>
<keyword id="KW-0862">Zinc</keyword>
<dbReference type="EC" id="6.1.1.3" evidence="1"/>
<dbReference type="EMBL" id="CP000660">
    <property type="protein sequence ID" value="ABP50332.1"/>
    <property type="molecule type" value="Genomic_DNA"/>
</dbReference>
<dbReference type="SMR" id="A4WIW5"/>
<dbReference type="STRING" id="340102.Pars_0746"/>
<dbReference type="KEGG" id="pas:Pars_0746"/>
<dbReference type="HOGENOM" id="CLU_029833_0_0_2"/>
<dbReference type="OrthoDB" id="372136at2157"/>
<dbReference type="PhylomeDB" id="A4WIW5"/>
<dbReference type="Proteomes" id="UP000001567">
    <property type="component" value="Chromosome"/>
</dbReference>
<dbReference type="GO" id="GO:0005737">
    <property type="term" value="C:cytoplasm"/>
    <property type="evidence" value="ECO:0007669"/>
    <property type="project" value="UniProtKB-SubCell"/>
</dbReference>
<dbReference type="GO" id="GO:0005524">
    <property type="term" value="F:ATP binding"/>
    <property type="evidence" value="ECO:0007669"/>
    <property type="project" value="UniProtKB-UniRule"/>
</dbReference>
<dbReference type="GO" id="GO:0004829">
    <property type="term" value="F:threonine-tRNA ligase activity"/>
    <property type="evidence" value="ECO:0007669"/>
    <property type="project" value="UniProtKB-UniRule"/>
</dbReference>
<dbReference type="GO" id="GO:0000049">
    <property type="term" value="F:tRNA binding"/>
    <property type="evidence" value="ECO:0007669"/>
    <property type="project" value="UniProtKB-KW"/>
</dbReference>
<dbReference type="GO" id="GO:0008270">
    <property type="term" value="F:zinc ion binding"/>
    <property type="evidence" value="ECO:0007669"/>
    <property type="project" value="InterPro"/>
</dbReference>
<dbReference type="GO" id="GO:0006435">
    <property type="term" value="P:threonyl-tRNA aminoacylation"/>
    <property type="evidence" value="ECO:0007669"/>
    <property type="project" value="UniProtKB-UniRule"/>
</dbReference>
<dbReference type="CDD" id="cd00860">
    <property type="entry name" value="ThrRS_anticodon"/>
    <property type="match status" value="1"/>
</dbReference>
<dbReference type="FunFam" id="3.30.930.10:FF:000076">
    <property type="entry name" value="Threonine--tRNA ligase"/>
    <property type="match status" value="1"/>
</dbReference>
<dbReference type="FunFam" id="3.40.50.800:FF:000001">
    <property type="entry name" value="Threonine--tRNA ligase"/>
    <property type="match status" value="1"/>
</dbReference>
<dbReference type="Gene3D" id="3.40.50.800">
    <property type="entry name" value="Anticodon-binding domain"/>
    <property type="match status" value="1"/>
</dbReference>
<dbReference type="Gene3D" id="3.30.930.10">
    <property type="entry name" value="Bira Bifunctional Protein, Domain 2"/>
    <property type="match status" value="1"/>
</dbReference>
<dbReference type="Gene3D" id="3.50.80.10">
    <property type="entry name" value="D-tyrosyl-tRNA(Tyr) deacylase"/>
    <property type="match status" value="1"/>
</dbReference>
<dbReference type="HAMAP" id="MF_00184">
    <property type="entry name" value="Thr_tRNA_synth"/>
    <property type="match status" value="1"/>
</dbReference>
<dbReference type="InterPro" id="IPR002314">
    <property type="entry name" value="aa-tRNA-synt_IIb"/>
</dbReference>
<dbReference type="InterPro" id="IPR006195">
    <property type="entry name" value="aa-tRNA-synth_II"/>
</dbReference>
<dbReference type="InterPro" id="IPR045864">
    <property type="entry name" value="aa-tRNA-synth_II/BPL/LPL"/>
</dbReference>
<dbReference type="InterPro" id="IPR004154">
    <property type="entry name" value="Anticodon-bd"/>
</dbReference>
<dbReference type="InterPro" id="IPR036621">
    <property type="entry name" value="Anticodon-bd_dom_sf"/>
</dbReference>
<dbReference type="InterPro" id="IPR023509">
    <property type="entry name" value="DTD-like_sf"/>
</dbReference>
<dbReference type="InterPro" id="IPR002320">
    <property type="entry name" value="Thr-tRNA-ligase_IIa"/>
</dbReference>
<dbReference type="InterPro" id="IPR015011">
    <property type="entry name" value="Threonyl-tRNA_syn_edit_dom_arc"/>
</dbReference>
<dbReference type="InterPro" id="IPR047246">
    <property type="entry name" value="ThrRS_anticodon"/>
</dbReference>
<dbReference type="NCBIfam" id="NF003068">
    <property type="entry name" value="PRK03991.1"/>
    <property type="match status" value="1"/>
</dbReference>
<dbReference type="PANTHER" id="PTHR11451:SF44">
    <property type="entry name" value="THREONINE--TRNA LIGASE, CHLOROPLASTIC_MITOCHONDRIAL 2"/>
    <property type="match status" value="1"/>
</dbReference>
<dbReference type="PANTHER" id="PTHR11451">
    <property type="entry name" value="THREONINE-TRNA LIGASE"/>
    <property type="match status" value="1"/>
</dbReference>
<dbReference type="Pfam" id="PF03129">
    <property type="entry name" value="HGTP_anticodon"/>
    <property type="match status" value="1"/>
</dbReference>
<dbReference type="Pfam" id="PF00587">
    <property type="entry name" value="tRNA-synt_2b"/>
    <property type="match status" value="1"/>
</dbReference>
<dbReference type="Pfam" id="PF08915">
    <property type="entry name" value="tRNA-Thr_ED"/>
    <property type="match status" value="1"/>
</dbReference>
<dbReference type="PRINTS" id="PR01047">
    <property type="entry name" value="TRNASYNTHTHR"/>
</dbReference>
<dbReference type="SUPFAM" id="SSF52954">
    <property type="entry name" value="Class II aaRS ABD-related"/>
    <property type="match status" value="1"/>
</dbReference>
<dbReference type="SUPFAM" id="SSF55681">
    <property type="entry name" value="Class II aaRS and biotin synthetases"/>
    <property type="match status" value="1"/>
</dbReference>
<dbReference type="PROSITE" id="PS50862">
    <property type="entry name" value="AA_TRNA_LIGASE_II"/>
    <property type="match status" value="1"/>
</dbReference>
<gene>
    <name evidence="1" type="primary">thrS</name>
    <name type="ordered locus">Pars_0746</name>
</gene>
<organism>
    <name type="scientific">Pyrobaculum arsenaticum (strain DSM 13514 / JCM 11321 / PZ6)</name>
    <dbReference type="NCBI Taxonomy" id="340102"/>
    <lineage>
        <taxon>Archaea</taxon>
        <taxon>Thermoproteota</taxon>
        <taxon>Thermoprotei</taxon>
        <taxon>Thermoproteales</taxon>
        <taxon>Thermoproteaceae</taxon>
        <taxon>Pyrobaculum</taxon>
    </lineage>
</organism>
<proteinExistence type="inferred from homology"/>
<protein>
    <recommendedName>
        <fullName evidence="1">Threonine--tRNA ligase</fullName>
        <ecNumber evidence="1">6.1.1.3</ecNumber>
    </recommendedName>
    <alternativeName>
        <fullName evidence="1">Threonyl-tRNA synthetase</fullName>
        <shortName evidence="1">ThrRS</shortName>
    </alternativeName>
</protein>
<name>SYT_PYRAR</name>
<evidence type="ECO:0000255" key="1">
    <source>
        <dbReference type="HAMAP-Rule" id="MF_00184"/>
    </source>
</evidence>
<reference key="1">
    <citation type="submission" date="2007-04" db="EMBL/GenBank/DDBJ databases">
        <title>Complete sequence of Pyrobaculum arsenaticum DSM 13514.</title>
        <authorList>
            <consortium name="US DOE Joint Genome Institute"/>
            <person name="Copeland A."/>
            <person name="Lucas S."/>
            <person name="Lapidus A."/>
            <person name="Barry K."/>
            <person name="Glavina del Rio T."/>
            <person name="Dalin E."/>
            <person name="Tice H."/>
            <person name="Pitluck S."/>
            <person name="Chain P."/>
            <person name="Malfatti S."/>
            <person name="Shin M."/>
            <person name="Vergez L."/>
            <person name="Schmutz J."/>
            <person name="Larimer F."/>
            <person name="Land M."/>
            <person name="Hauser L."/>
            <person name="Kyrpides N."/>
            <person name="Mikhailova N."/>
            <person name="Cozen A.E."/>
            <person name="Fitz-Gibbon S.T."/>
            <person name="House C.H."/>
            <person name="Saltikov C."/>
            <person name="Lowe T.M."/>
            <person name="Richardson P."/>
        </authorList>
    </citation>
    <scope>NUCLEOTIDE SEQUENCE [LARGE SCALE GENOMIC DNA]</scope>
    <source>
        <strain>ATCC 700994 / DSM 13514 / JCM 11321 / PZ6</strain>
    </source>
</reference>
<comment type="function">
    <text evidence="1">Catalyzes the attachment of threonine to tRNA(Thr) in a two-step reaction: L-threonine is first activated by ATP to form Thr-AMP and then transferred to the acceptor end of tRNA(Thr). Also edits incorrectly charged L-seryl-tRNA(Thr).</text>
</comment>
<comment type="catalytic activity">
    <reaction evidence="1">
        <text>tRNA(Thr) + L-threonine + ATP = L-threonyl-tRNA(Thr) + AMP + diphosphate + H(+)</text>
        <dbReference type="Rhea" id="RHEA:24624"/>
        <dbReference type="Rhea" id="RHEA-COMP:9670"/>
        <dbReference type="Rhea" id="RHEA-COMP:9704"/>
        <dbReference type="ChEBI" id="CHEBI:15378"/>
        <dbReference type="ChEBI" id="CHEBI:30616"/>
        <dbReference type="ChEBI" id="CHEBI:33019"/>
        <dbReference type="ChEBI" id="CHEBI:57926"/>
        <dbReference type="ChEBI" id="CHEBI:78442"/>
        <dbReference type="ChEBI" id="CHEBI:78534"/>
        <dbReference type="ChEBI" id="CHEBI:456215"/>
        <dbReference type="EC" id="6.1.1.3"/>
    </reaction>
</comment>
<comment type="cofactor">
    <cofactor evidence="1">
        <name>Zn(2+)</name>
        <dbReference type="ChEBI" id="CHEBI:29105"/>
    </cofactor>
    <text evidence="1">Binds 1 zinc ion per subunit.</text>
</comment>
<comment type="subunit">
    <text evidence="1">Homodimer.</text>
</comment>
<comment type="subcellular location">
    <subcellularLocation>
        <location evidence="1">Cytoplasm</location>
    </subcellularLocation>
</comment>
<comment type="domain">
    <text evidence="1">The N-terminal domain is an archaea-specific tRNA-editing domain that hydrolyzes incorrectly charged L-seryl-tRNA(Thr). Catalysis of tRNA editing is performed by the charged tRNA itself.</text>
</comment>
<comment type="similarity">
    <text evidence="1">Belongs to the class-II aminoacyl-tRNA synthetase family.</text>
</comment>
<accession>A4WIW5</accession>
<sequence length="608" mass="70058">MRVLYIHAERFSWDPRDPALDIRDEPVSGSASNALVVFVSVERGDSPDEGFLKAVAADVVETAKKVGASSIVVYPYAHLSTDLARPYTAREVVGKLYEVVKAQFKGQVLKAPFGYYKAFELKCLGHPLSELSRVFKPEEAKTEKRAEERRDYYVVLTPDGAEYDPAKFNYAGLDDFKALVEKEVFKRELGGGEPKYLDYLRKFGFEWEPMSDVGHMRYAPEATVMMELVEDYAYMVAKSLGIPVFKIRGTNMFKLSEYAIESHARLFGERLYVVESDTDLILRYAACFQQFAMVKDWVISYRHLPFGLLEIADSYRHEQPGETVLLFRLRRFYMPDLHIFTKDLKEAMEVTFKLHEVIFREIGKLGRTYVSLYNVTEDFYKGHREYLVELARREGKPILVRILPGQKYYWVLNVEFHIVDELGRPREIATFQIDVGNAQRFGIKYVDENNQVRYPVIIHTAILGSVERYLYAVFDTMAKMEKEGKTPRLPTWLSPVQTRVIPVSKENLKYAMAVADLLEAEGIRVDVDDREETLSKKIRDAETAWVPYIIVVGSKEEAEGTVTVRERGGGQYKAKAEELAKKIREEVKGYPQRPLYLPRLLSQRPSRH</sequence>
<feature type="chain" id="PRO_1000020481" description="Threonine--tRNA ligase">
    <location>
        <begin position="1"/>
        <end position="608"/>
    </location>
</feature>
<feature type="region of interest" description="Editing domain" evidence="1">
    <location>
        <begin position="1"/>
        <end position="143"/>
    </location>
</feature>
<feature type="region of interest" description="Catalytic" evidence="1">
    <location>
        <begin position="194"/>
        <end position="490"/>
    </location>
</feature>
<feature type="region of interest" description="Catalytic">
    <location>
        <begin position="195"/>
        <end position="490"/>
    </location>
</feature>
<feature type="binding site" evidence="1">
    <location>
        <position position="287"/>
    </location>
    <ligand>
        <name>Zn(2+)</name>
        <dbReference type="ChEBI" id="CHEBI:29105"/>
    </ligand>
</feature>
<feature type="binding site" evidence="1">
    <location>
        <position position="338"/>
    </location>
    <ligand>
        <name>Zn(2+)</name>
        <dbReference type="ChEBI" id="CHEBI:29105"/>
    </ligand>
</feature>
<feature type="binding site" evidence="1">
    <location>
        <position position="459"/>
    </location>
    <ligand>
        <name>Zn(2+)</name>
        <dbReference type="ChEBI" id="CHEBI:29105"/>
    </ligand>
</feature>